<accession>Q3ZJ38</accession>
<protein>
    <recommendedName>
        <fullName evidence="1">Small ribosomal subunit protein bS18c</fullName>
    </recommendedName>
    <alternativeName>
        <fullName evidence="2">30S ribosomal protein S18, chloroplastic</fullName>
    </alternativeName>
</protein>
<comment type="subunit">
    <text>Part of the 30S ribosomal subunit.</text>
</comment>
<comment type="subcellular location">
    <subcellularLocation>
        <location>Plastid</location>
        <location>Chloroplast</location>
    </subcellularLocation>
</comment>
<comment type="similarity">
    <text evidence="1">Belongs to the bacterial ribosomal protein bS18 family.</text>
</comment>
<evidence type="ECO:0000255" key="1">
    <source>
        <dbReference type="HAMAP-Rule" id="MF_00270"/>
    </source>
</evidence>
<evidence type="ECO:0000305" key="2"/>
<proteinExistence type="inferred from homology"/>
<sequence>MRKYNPRKIKNKVNIPIVLHKANSTIPFVQGTVDYKNVALLRKYISAEGKILSRRLTRLTSKQQRHISTAIKTARIAGLLPFINQ</sequence>
<organism>
    <name type="scientific">Tupiella akineta</name>
    <name type="common">Green alga</name>
    <name type="synonym">Pseudendoclonium akinetum</name>
    <dbReference type="NCBI Taxonomy" id="160070"/>
    <lineage>
        <taxon>Eukaryota</taxon>
        <taxon>Viridiplantae</taxon>
        <taxon>Chlorophyta</taxon>
        <taxon>Ulvophyceae</taxon>
        <taxon>OUU clade</taxon>
        <taxon>Ulotrichales</taxon>
        <taxon>Tupiellaceae</taxon>
        <taxon>Tupiella</taxon>
    </lineage>
</organism>
<geneLocation type="chloroplast"/>
<gene>
    <name evidence="1" type="primary">rps18</name>
</gene>
<feature type="chain" id="PRO_0000276885" description="Small ribosomal subunit protein bS18c">
    <location>
        <begin position="1"/>
        <end position="85"/>
    </location>
</feature>
<keyword id="KW-0150">Chloroplast</keyword>
<keyword id="KW-0934">Plastid</keyword>
<keyword id="KW-0687">Ribonucleoprotein</keyword>
<keyword id="KW-0689">Ribosomal protein</keyword>
<keyword id="KW-0694">RNA-binding</keyword>
<keyword id="KW-0699">rRNA-binding</keyword>
<dbReference type="EMBL" id="AY835431">
    <property type="protein sequence ID" value="AAV80651.1"/>
    <property type="molecule type" value="Genomic_DNA"/>
</dbReference>
<dbReference type="RefSeq" id="YP_636229.1">
    <property type="nucleotide sequence ID" value="NC_008114.1"/>
</dbReference>
<dbReference type="SMR" id="Q3ZJ38"/>
<dbReference type="GeneID" id="4108846"/>
<dbReference type="GO" id="GO:0009507">
    <property type="term" value="C:chloroplast"/>
    <property type="evidence" value="ECO:0007669"/>
    <property type="project" value="UniProtKB-SubCell"/>
</dbReference>
<dbReference type="GO" id="GO:0005763">
    <property type="term" value="C:mitochondrial small ribosomal subunit"/>
    <property type="evidence" value="ECO:0007669"/>
    <property type="project" value="TreeGrafter"/>
</dbReference>
<dbReference type="GO" id="GO:0070181">
    <property type="term" value="F:small ribosomal subunit rRNA binding"/>
    <property type="evidence" value="ECO:0007669"/>
    <property type="project" value="TreeGrafter"/>
</dbReference>
<dbReference type="GO" id="GO:0003735">
    <property type="term" value="F:structural constituent of ribosome"/>
    <property type="evidence" value="ECO:0007669"/>
    <property type="project" value="InterPro"/>
</dbReference>
<dbReference type="GO" id="GO:0006412">
    <property type="term" value="P:translation"/>
    <property type="evidence" value="ECO:0007669"/>
    <property type="project" value="UniProtKB-UniRule"/>
</dbReference>
<dbReference type="Gene3D" id="4.10.640.10">
    <property type="entry name" value="Ribosomal protein S18"/>
    <property type="match status" value="1"/>
</dbReference>
<dbReference type="HAMAP" id="MF_00270">
    <property type="entry name" value="Ribosomal_bS18"/>
    <property type="match status" value="1"/>
</dbReference>
<dbReference type="InterPro" id="IPR001648">
    <property type="entry name" value="Ribosomal_bS18"/>
</dbReference>
<dbReference type="InterPro" id="IPR036870">
    <property type="entry name" value="Ribosomal_bS18_sf"/>
</dbReference>
<dbReference type="NCBIfam" id="TIGR00165">
    <property type="entry name" value="S18"/>
    <property type="match status" value="1"/>
</dbReference>
<dbReference type="PANTHER" id="PTHR13479">
    <property type="entry name" value="30S RIBOSOMAL PROTEIN S18"/>
    <property type="match status" value="1"/>
</dbReference>
<dbReference type="PANTHER" id="PTHR13479:SF40">
    <property type="entry name" value="SMALL RIBOSOMAL SUBUNIT PROTEIN BS18M"/>
    <property type="match status" value="1"/>
</dbReference>
<dbReference type="Pfam" id="PF01084">
    <property type="entry name" value="Ribosomal_S18"/>
    <property type="match status" value="1"/>
</dbReference>
<dbReference type="PRINTS" id="PR00974">
    <property type="entry name" value="RIBOSOMALS18"/>
</dbReference>
<dbReference type="SUPFAM" id="SSF46911">
    <property type="entry name" value="Ribosomal protein S18"/>
    <property type="match status" value="1"/>
</dbReference>
<reference key="1">
    <citation type="journal article" date="2005" name="Mol. Biol. Evol.">
        <title>The chloroplast genome sequence of the green alga Pseudendoclonium akinetum (Ulvophyceae) reveals unusual structural features and new insights into the branching order of chlorophyte lineages.</title>
        <authorList>
            <person name="Pombert J.-F."/>
            <person name="Otis C."/>
            <person name="Lemieux C."/>
            <person name="Turmel M."/>
        </authorList>
    </citation>
    <scope>NUCLEOTIDE SEQUENCE [LARGE SCALE GENOMIC DNA]</scope>
    <source>
        <strain>UTEX 1912</strain>
    </source>
</reference>
<name>RR18_TUPAK</name>